<sequence length="172" mass="19047">MVDKRESYTKEDLLASGRGELFGAKGPQLPAPNMLMMDRVVKMTETGGNFDKGYVEAELDINPDLWFFGCHFIGDPVMPGCLGLDAMWQLVGFYLGWLGGEGKGRALGVGEVKFTGQVLPTARKVTYRIHFKRIVNRRLIMGLADGEVLVDGRLIYTAHDLKVGLFQDTSAF</sequence>
<protein>
    <recommendedName>
        <fullName evidence="1">3-hydroxydecanoyl-[acyl-carrier-protein] dehydratase</fullName>
        <ecNumber evidence="1">4.2.1.59</ecNumber>
    </recommendedName>
    <alternativeName>
        <fullName evidence="1">3-hydroxyacyl-[acyl-carrier-protein] dehydratase FabA</fullName>
    </alternativeName>
    <alternativeName>
        <fullName evidence="1">Beta-hydroxydecanoyl thioester dehydrase</fullName>
    </alternativeName>
    <alternativeName>
        <fullName evidence="1">Trans-2-decenoyl-[acyl-carrier-protein] isomerase</fullName>
        <ecNumber evidence="1">5.3.3.14</ecNumber>
    </alternativeName>
</protein>
<accession>B4TSI0</accession>
<gene>
    <name evidence="1" type="primary">fabA</name>
    <name type="ordered locus">SeSA_A1130</name>
</gene>
<dbReference type="EC" id="4.2.1.59" evidence="1"/>
<dbReference type="EC" id="5.3.3.14" evidence="1"/>
<dbReference type="EMBL" id="CP001127">
    <property type="protein sequence ID" value="ACF90816.1"/>
    <property type="molecule type" value="Genomic_DNA"/>
</dbReference>
<dbReference type="RefSeq" id="WP_000227928.1">
    <property type="nucleotide sequence ID" value="NC_011094.1"/>
</dbReference>
<dbReference type="SMR" id="B4TSI0"/>
<dbReference type="KEGG" id="sew:SeSA_A1130"/>
<dbReference type="HOGENOM" id="CLU_097925_0_0_6"/>
<dbReference type="UniPathway" id="UPA00094"/>
<dbReference type="Proteomes" id="UP000001865">
    <property type="component" value="Chromosome"/>
</dbReference>
<dbReference type="GO" id="GO:0005737">
    <property type="term" value="C:cytoplasm"/>
    <property type="evidence" value="ECO:0007669"/>
    <property type="project" value="UniProtKB-SubCell"/>
</dbReference>
<dbReference type="GO" id="GO:0019171">
    <property type="term" value="F:(3R)-hydroxyacyl-[acyl-carrier-protein] dehydratase activity"/>
    <property type="evidence" value="ECO:0007669"/>
    <property type="project" value="UniProtKB-UniRule"/>
</dbReference>
<dbReference type="GO" id="GO:0034017">
    <property type="term" value="F:trans-2-decenoyl-acyl-carrier-protein isomerase activity"/>
    <property type="evidence" value="ECO:0007669"/>
    <property type="project" value="UniProtKB-UniRule"/>
</dbReference>
<dbReference type="GO" id="GO:0006636">
    <property type="term" value="P:unsaturated fatty acid biosynthetic process"/>
    <property type="evidence" value="ECO:0007669"/>
    <property type="project" value="UniProtKB-UniRule"/>
</dbReference>
<dbReference type="CDD" id="cd01287">
    <property type="entry name" value="FabA"/>
    <property type="match status" value="1"/>
</dbReference>
<dbReference type="FunFam" id="3.10.129.10:FF:000003">
    <property type="entry name" value="3-hydroxydecanoyl-[acyl-carrier-protein] dehydratase"/>
    <property type="match status" value="1"/>
</dbReference>
<dbReference type="Gene3D" id="3.10.129.10">
    <property type="entry name" value="Hotdog Thioesterase"/>
    <property type="match status" value="1"/>
</dbReference>
<dbReference type="HAMAP" id="MF_00405">
    <property type="entry name" value="FabA"/>
    <property type="match status" value="1"/>
</dbReference>
<dbReference type="InterPro" id="IPR010083">
    <property type="entry name" value="FabA"/>
</dbReference>
<dbReference type="InterPro" id="IPR013114">
    <property type="entry name" value="FabA_FabZ"/>
</dbReference>
<dbReference type="InterPro" id="IPR029069">
    <property type="entry name" value="HotDog_dom_sf"/>
</dbReference>
<dbReference type="NCBIfam" id="TIGR01749">
    <property type="entry name" value="fabA"/>
    <property type="match status" value="1"/>
</dbReference>
<dbReference type="NCBIfam" id="NF003509">
    <property type="entry name" value="PRK05174.1"/>
    <property type="match status" value="1"/>
</dbReference>
<dbReference type="PANTHER" id="PTHR30272">
    <property type="entry name" value="3-HYDROXYACYL-[ACYL-CARRIER-PROTEIN] DEHYDRATASE"/>
    <property type="match status" value="1"/>
</dbReference>
<dbReference type="PANTHER" id="PTHR30272:SF8">
    <property type="entry name" value="3-HYDROXYDECANOYL-[ACYL-CARRIER-PROTEIN] DEHYDRATASE"/>
    <property type="match status" value="1"/>
</dbReference>
<dbReference type="Pfam" id="PF07977">
    <property type="entry name" value="FabA"/>
    <property type="match status" value="1"/>
</dbReference>
<dbReference type="SUPFAM" id="SSF54637">
    <property type="entry name" value="Thioesterase/thiol ester dehydrase-isomerase"/>
    <property type="match status" value="1"/>
</dbReference>
<proteinExistence type="inferred from homology"/>
<evidence type="ECO:0000255" key="1">
    <source>
        <dbReference type="HAMAP-Rule" id="MF_00405"/>
    </source>
</evidence>
<name>FABA_SALSV</name>
<reference key="1">
    <citation type="journal article" date="2011" name="J. Bacteriol.">
        <title>Comparative genomics of 28 Salmonella enterica isolates: evidence for CRISPR-mediated adaptive sublineage evolution.</title>
        <authorList>
            <person name="Fricke W.F."/>
            <person name="Mammel M.K."/>
            <person name="McDermott P.F."/>
            <person name="Tartera C."/>
            <person name="White D.G."/>
            <person name="Leclerc J.E."/>
            <person name="Ravel J."/>
            <person name="Cebula T.A."/>
        </authorList>
    </citation>
    <scope>NUCLEOTIDE SEQUENCE [LARGE SCALE GENOMIC DNA]</scope>
    <source>
        <strain>CVM19633</strain>
    </source>
</reference>
<organism>
    <name type="scientific">Salmonella schwarzengrund (strain CVM19633)</name>
    <dbReference type="NCBI Taxonomy" id="439843"/>
    <lineage>
        <taxon>Bacteria</taxon>
        <taxon>Pseudomonadati</taxon>
        <taxon>Pseudomonadota</taxon>
        <taxon>Gammaproteobacteria</taxon>
        <taxon>Enterobacterales</taxon>
        <taxon>Enterobacteriaceae</taxon>
        <taxon>Salmonella</taxon>
    </lineage>
</organism>
<comment type="function">
    <text evidence="1">Necessary for the introduction of cis unsaturation into fatty acids. Catalyzes the dehydration of (3R)-3-hydroxydecanoyl-ACP to E-(2)-decenoyl-ACP and then its isomerization to Z-(3)-decenoyl-ACP. Can catalyze the dehydratase reaction for beta-hydroxyacyl-ACPs with saturated chain lengths up to 16:0, being most active on intermediate chain length.</text>
</comment>
<comment type="catalytic activity">
    <reaction evidence="1">
        <text>a (3R)-hydroxyacyl-[ACP] = a (2E)-enoyl-[ACP] + H2O</text>
        <dbReference type="Rhea" id="RHEA:13097"/>
        <dbReference type="Rhea" id="RHEA-COMP:9925"/>
        <dbReference type="Rhea" id="RHEA-COMP:9945"/>
        <dbReference type="ChEBI" id="CHEBI:15377"/>
        <dbReference type="ChEBI" id="CHEBI:78784"/>
        <dbReference type="ChEBI" id="CHEBI:78827"/>
        <dbReference type="EC" id="4.2.1.59"/>
    </reaction>
</comment>
<comment type="catalytic activity">
    <reaction evidence="1">
        <text>(3R)-hydroxydecanoyl-[ACP] = (2E)-decenoyl-[ACP] + H2O</text>
        <dbReference type="Rhea" id="RHEA:41860"/>
        <dbReference type="Rhea" id="RHEA-COMP:9638"/>
        <dbReference type="Rhea" id="RHEA-COMP:9639"/>
        <dbReference type="ChEBI" id="CHEBI:15377"/>
        <dbReference type="ChEBI" id="CHEBI:78466"/>
        <dbReference type="ChEBI" id="CHEBI:78467"/>
    </reaction>
</comment>
<comment type="catalytic activity">
    <reaction evidence="1">
        <text>(2E)-decenoyl-[ACP] = (3Z)-decenoyl-[ACP]</text>
        <dbReference type="Rhea" id="RHEA:23568"/>
        <dbReference type="Rhea" id="RHEA-COMP:9639"/>
        <dbReference type="Rhea" id="RHEA-COMP:9927"/>
        <dbReference type="ChEBI" id="CHEBI:78467"/>
        <dbReference type="ChEBI" id="CHEBI:78798"/>
        <dbReference type="EC" id="5.3.3.14"/>
    </reaction>
</comment>
<comment type="pathway">
    <text evidence="1">Lipid metabolism; fatty acid biosynthesis.</text>
</comment>
<comment type="subunit">
    <text evidence="1">Homodimer.</text>
</comment>
<comment type="subcellular location">
    <subcellularLocation>
        <location evidence="1">Cytoplasm</location>
    </subcellularLocation>
</comment>
<comment type="similarity">
    <text evidence="1">Belongs to the thioester dehydratase family. FabA subfamily.</text>
</comment>
<feature type="chain" id="PRO_1000201206" description="3-hydroxydecanoyl-[acyl-carrier-protein] dehydratase">
    <location>
        <begin position="1"/>
        <end position="172"/>
    </location>
</feature>
<feature type="active site" evidence="1">
    <location>
        <position position="71"/>
    </location>
</feature>
<keyword id="KW-0963">Cytoplasm</keyword>
<keyword id="KW-0275">Fatty acid biosynthesis</keyword>
<keyword id="KW-0276">Fatty acid metabolism</keyword>
<keyword id="KW-0413">Isomerase</keyword>
<keyword id="KW-0444">Lipid biosynthesis</keyword>
<keyword id="KW-0443">Lipid metabolism</keyword>
<keyword id="KW-0456">Lyase</keyword>